<reference key="1">
    <citation type="submission" date="2009-02" db="EMBL/GenBank/DDBJ databases">
        <title>Genome sequence of Bacillus cereus 03BB102.</title>
        <authorList>
            <person name="Dodson R.J."/>
            <person name="Jackson P."/>
            <person name="Munk A.C."/>
            <person name="Brettin T."/>
            <person name="Bruce D."/>
            <person name="Detter C."/>
            <person name="Tapia R."/>
            <person name="Han C."/>
            <person name="Sutton G."/>
            <person name="Sims D."/>
        </authorList>
    </citation>
    <scope>NUCLEOTIDE SEQUENCE [LARGE SCALE GENOMIC DNA]</scope>
    <source>
        <strain>03BB102</strain>
    </source>
</reference>
<protein>
    <recommendedName>
        <fullName evidence="1">Inosose dehydratase</fullName>
        <ecNumber evidence="1">4.2.1.44</ecNumber>
    </recommendedName>
    <alternativeName>
        <fullName evidence="1">2-keto-myo-inositol dehydratase</fullName>
        <shortName evidence="1">2KMI dehydratase</shortName>
    </alternativeName>
</protein>
<comment type="function">
    <text evidence="1">Catalyzes the dehydration of inosose (2-keto-myo-inositol, 2KMI or 2,4,6/3,5-pentahydroxycyclohexanone) to 3D-(3,5/4)-trihydroxycyclohexane-1,2-dione (D-2,3-diketo-4-deoxy-epi-inositol).</text>
</comment>
<comment type="catalytic activity">
    <reaction evidence="1">
        <text>scyllo-inosose = 3D-3,5/4-trihydroxycyclohexane-1,2-dione + H2O</text>
        <dbReference type="Rhea" id="RHEA:14065"/>
        <dbReference type="ChEBI" id="CHEBI:15377"/>
        <dbReference type="ChEBI" id="CHEBI:17811"/>
        <dbReference type="ChEBI" id="CHEBI:28446"/>
        <dbReference type="EC" id="4.2.1.44"/>
    </reaction>
</comment>
<comment type="cofactor">
    <cofactor evidence="1">
        <name>glutathione</name>
        <dbReference type="ChEBI" id="CHEBI:57925"/>
    </cofactor>
</comment>
<comment type="cofactor">
    <cofactor evidence="1">
        <name>Co(2+)</name>
        <dbReference type="ChEBI" id="CHEBI:48828"/>
    </cofactor>
    <cofactor evidence="1">
        <name>Mn(2+)</name>
        <dbReference type="ChEBI" id="CHEBI:29035"/>
    </cofactor>
</comment>
<comment type="pathway">
    <text evidence="1">Polyol metabolism; myo-inositol degradation into acetyl-CoA; acetyl-CoA from myo-inositol: step 2/7.</text>
</comment>
<comment type="similarity">
    <text evidence="1">Belongs to the IolE/MocC family.</text>
</comment>
<dbReference type="EC" id="4.2.1.44" evidence="1"/>
<dbReference type="EMBL" id="CP001407">
    <property type="protein sequence ID" value="ACO30511.1"/>
    <property type="molecule type" value="Genomic_DNA"/>
</dbReference>
<dbReference type="RefSeq" id="WP_000471988.1">
    <property type="nucleotide sequence ID" value="NZ_CP009318.1"/>
</dbReference>
<dbReference type="SMR" id="C1EVJ4"/>
<dbReference type="KEGG" id="bcx:BCA_2600"/>
<dbReference type="PATRIC" id="fig|572264.18.peg.2549"/>
<dbReference type="UniPathway" id="UPA00076">
    <property type="reaction ID" value="UER00144"/>
</dbReference>
<dbReference type="Proteomes" id="UP000002210">
    <property type="component" value="Chromosome"/>
</dbReference>
<dbReference type="GO" id="GO:0030145">
    <property type="term" value="F:manganese ion binding"/>
    <property type="evidence" value="ECO:0007669"/>
    <property type="project" value="UniProtKB-UniRule"/>
</dbReference>
<dbReference type="GO" id="GO:0050114">
    <property type="term" value="F:myo-inosose-2 dehydratase activity"/>
    <property type="evidence" value="ECO:0007669"/>
    <property type="project" value="UniProtKB-UniRule"/>
</dbReference>
<dbReference type="GO" id="GO:0019310">
    <property type="term" value="P:inositol catabolic process"/>
    <property type="evidence" value="ECO:0007669"/>
    <property type="project" value="UniProtKB-UniRule"/>
</dbReference>
<dbReference type="Gene3D" id="3.20.20.150">
    <property type="entry name" value="Divalent-metal-dependent TIM barrel enzymes"/>
    <property type="match status" value="1"/>
</dbReference>
<dbReference type="HAMAP" id="MF_01672">
    <property type="entry name" value="IolE"/>
    <property type="match status" value="1"/>
</dbReference>
<dbReference type="InterPro" id="IPR023952">
    <property type="entry name" value="IolE"/>
</dbReference>
<dbReference type="InterPro" id="IPR030823">
    <property type="entry name" value="IolE/MocC"/>
</dbReference>
<dbReference type="InterPro" id="IPR050312">
    <property type="entry name" value="IolE/XylAMocC-like"/>
</dbReference>
<dbReference type="InterPro" id="IPR036237">
    <property type="entry name" value="Xyl_isomerase-like_sf"/>
</dbReference>
<dbReference type="InterPro" id="IPR013022">
    <property type="entry name" value="Xyl_isomerase-like_TIM-brl"/>
</dbReference>
<dbReference type="NCBIfam" id="TIGR04379">
    <property type="entry name" value="myo_inos_iolE"/>
    <property type="match status" value="1"/>
</dbReference>
<dbReference type="PANTHER" id="PTHR12110">
    <property type="entry name" value="HYDROXYPYRUVATE ISOMERASE"/>
    <property type="match status" value="1"/>
</dbReference>
<dbReference type="PANTHER" id="PTHR12110:SF41">
    <property type="entry name" value="INOSOSE DEHYDRATASE"/>
    <property type="match status" value="1"/>
</dbReference>
<dbReference type="Pfam" id="PF01261">
    <property type="entry name" value="AP_endonuc_2"/>
    <property type="match status" value="1"/>
</dbReference>
<dbReference type="SUPFAM" id="SSF51658">
    <property type="entry name" value="Xylose isomerase-like"/>
    <property type="match status" value="1"/>
</dbReference>
<keyword id="KW-0170">Cobalt</keyword>
<keyword id="KW-0456">Lyase</keyword>
<keyword id="KW-0464">Manganese</keyword>
<evidence type="ECO:0000255" key="1">
    <source>
        <dbReference type="HAMAP-Rule" id="MF_01672"/>
    </source>
</evidence>
<proteinExistence type="inferred from homology"/>
<sequence>MFKENTIKLGIAPIAWTNDDMPELGAENTFEQCISEMALAGFNGSEVGNKYPRNTVVLKKSLELRNLEIASAWFSTFLTTKPLEETVEEFIKHRDFLHDMGAKVIVVSEQGHSIQGLMDVPLFKNKPVFTEEEWNKLADGLHHLGKLAQEKGLHIVYHHHMGTGVQTTAEIEKLMDITDSALVSLLFDTGHLVFSGEEPLYILKKYLPRIKHVHLKDIRQEVVDIVKENELSFLQAVKNGAFTVPGDGVIEFDEVFTILANSDYQGWFVVEAEQDPALANPFEYALKAREFIREKAGL</sequence>
<organism>
    <name type="scientific">Bacillus cereus (strain 03BB102)</name>
    <dbReference type="NCBI Taxonomy" id="572264"/>
    <lineage>
        <taxon>Bacteria</taxon>
        <taxon>Bacillati</taxon>
        <taxon>Bacillota</taxon>
        <taxon>Bacilli</taxon>
        <taxon>Bacillales</taxon>
        <taxon>Bacillaceae</taxon>
        <taxon>Bacillus</taxon>
        <taxon>Bacillus cereus group</taxon>
    </lineage>
</organism>
<name>IOLE_BACC3</name>
<gene>
    <name evidence="1" type="primary">iolE</name>
    <name type="ordered locus">BCA_2600</name>
</gene>
<feature type="chain" id="PRO_1000187324" description="Inosose dehydratase">
    <location>
        <begin position="1"/>
        <end position="298"/>
    </location>
</feature>
<accession>C1EVJ4</accession>